<name>TBL3_RAT</name>
<organism>
    <name type="scientific">Rattus norvegicus</name>
    <name type="common">Rat</name>
    <dbReference type="NCBI Taxonomy" id="10116"/>
    <lineage>
        <taxon>Eukaryota</taxon>
        <taxon>Metazoa</taxon>
        <taxon>Chordata</taxon>
        <taxon>Craniata</taxon>
        <taxon>Vertebrata</taxon>
        <taxon>Euteleostomi</taxon>
        <taxon>Mammalia</taxon>
        <taxon>Eutheria</taxon>
        <taxon>Euarchontoglires</taxon>
        <taxon>Glires</taxon>
        <taxon>Rodentia</taxon>
        <taxon>Myomorpha</taxon>
        <taxon>Muroidea</taxon>
        <taxon>Muridae</taxon>
        <taxon>Murinae</taxon>
        <taxon>Rattus</taxon>
    </lineage>
</organism>
<dbReference type="EMBL" id="BC085837">
    <property type="protein sequence ID" value="AAH85837.1"/>
    <property type="molecule type" value="mRNA"/>
</dbReference>
<dbReference type="RefSeq" id="NP_001008278.1">
    <property type="nucleotide sequence ID" value="NM_001008277.1"/>
</dbReference>
<dbReference type="SMR" id="Q5U2W5"/>
<dbReference type="FunCoup" id="Q5U2W5">
    <property type="interactions" value="3445"/>
</dbReference>
<dbReference type="STRING" id="10116.ENSRNOP00000018405"/>
<dbReference type="iPTMnet" id="Q5U2W5"/>
<dbReference type="PhosphoSitePlus" id="Q5U2W5"/>
<dbReference type="PaxDb" id="10116-ENSRNOP00000018405"/>
<dbReference type="Ensembl" id="ENSRNOT00000018405.6">
    <property type="protein sequence ID" value="ENSRNOP00000018405.4"/>
    <property type="gene ID" value="ENSRNOG00000013429.6"/>
</dbReference>
<dbReference type="GeneID" id="287120"/>
<dbReference type="KEGG" id="rno:287120"/>
<dbReference type="UCSC" id="RGD:1305142">
    <property type="organism name" value="rat"/>
</dbReference>
<dbReference type="AGR" id="RGD:1305142"/>
<dbReference type="CTD" id="10607"/>
<dbReference type="RGD" id="1305142">
    <property type="gene designation" value="Tbl3"/>
</dbReference>
<dbReference type="eggNOG" id="KOG0319">
    <property type="taxonomic scope" value="Eukaryota"/>
</dbReference>
<dbReference type="GeneTree" id="ENSGT00940000157651"/>
<dbReference type="HOGENOM" id="CLU_009276_1_0_1"/>
<dbReference type="InParanoid" id="Q5U2W5"/>
<dbReference type="OMA" id="PYVQRHF"/>
<dbReference type="OrthoDB" id="5414888at2759"/>
<dbReference type="PhylomeDB" id="Q5U2W5"/>
<dbReference type="TreeFam" id="TF314872"/>
<dbReference type="Reactome" id="R-RNO-6791226">
    <property type="pathway name" value="Major pathway of rRNA processing in the nucleolus and cytosol"/>
</dbReference>
<dbReference type="PRO" id="PR:Q5U2W5"/>
<dbReference type="Proteomes" id="UP000002494">
    <property type="component" value="Chromosome 10"/>
</dbReference>
<dbReference type="Bgee" id="ENSRNOG00000013429">
    <property type="expression patterns" value="Expressed in pancreas and 20 other cell types or tissues"/>
</dbReference>
<dbReference type="GO" id="GO:0030686">
    <property type="term" value="C:90S preribosome"/>
    <property type="evidence" value="ECO:0000318"/>
    <property type="project" value="GO_Central"/>
</dbReference>
<dbReference type="GO" id="GO:0005730">
    <property type="term" value="C:nucleolus"/>
    <property type="evidence" value="ECO:0000318"/>
    <property type="project" value="GO_Central"/>
</dbReference>
<dbReference type="GO" id="GO:0005654">
    <property type="term" value="C:nucleoplasm"/>
    <property type="evidence" value="ECO:0007669"/>
    <property type="project" value="Ensembl"/>
</dbReference>
<dbReference type="GO" id="GO:0032040">
    <property type="term" value="C:small-subunit processome"/>
    <property type="evidence" value="ECO:0000250"/>
    <property type="project" value="UniProtKB"/>
</dbReference>
<dbReference type="GO" id="GO:0034511">
    <property type="term" value="F:U3 snoRNA binding"/>
    <property type="evidence" value="ECO:0000318"/>
    <property type="project" value="GO_Central"/>
</dbReference>
<dbReference type="GO" id="GO:0000480">
    <property type="term" value="P:endonucleolytic cleavage in 5'-ETS of tricistronic rRNA transcript (SSU-rRNA, 5.8S rRNA, LSU-rRNA)"/>
    <property type="evidence" value="ECO:0000318"/>
    <property type="project" value="GO_Central"/>
</dbReference>
<dbReference type="GO" id="GO:0000472">
    <property type="term" value="P:endonucleolytic cleavage to generate mature 5'-end of SSU-rRNA from (SSU-rRNA, 5.8S rRNA, LSU-rRNA)"/>
    <property type="evidence" value="ECO:0000318"/>
    <property type="project" value="GO_Central"/>
</dbReference>
<dbReference type="GO" id="GO:0042274">
    <property type="term" value="P:ribosomal small subunit biogenesis"/>
    <property type="evidence" value="ECO:0000250"/>
    <property type="project" value="UniProtKB"/>
</dbReference>
<dbReference type="CDD" id="cd00200">
    <property type="entry name" value="WD40"/>
    <property type="match status" value="2"/>
</dbReference>
<dbReference type="FunFam" id="2.130.10.10:FF:000480">
    <property type="entry name" value="Transducin beta like 3"/>
    <property type="match status" value="1"/>
</dbReference>
<dbReference type="FunFam" id="2.130.10.10:FF:000230">
    <property type="entry name" value="Transducin beta-like protein 3"/>
    <property type="match status" value="1"/>
</dbReference>
<dbReference type="FunFam" id="2.130.10.10:FF:000605">
    <property type="entry name" value="Transducin beta-like protein 3"/>
    <property type="match status" value="1"/>
</dbReference>
<dbReference type="FunFam" id="2.130.10.10:FF:000795">
    <property type="entry name" value="Transducin beta-like protein 3"/>
    <property type="match status" value="1"/>
</dbReference>
<dbReference type="Gene3D" id="2.130.10.10">
    <property type="entry name" value="YVTN repeat-like/Quinoprotein amine dehydrogenase"/>
    <property type="match status" value="3"/>
</dbReference>
<dbReference type="InterPro" id="IPR020472">
    <property type="entry name" value="G-protein_beta_WD-40_rep"/>
</dbReference>
<dbReference type="InterPro" id="IPR011047">
    <property type="entry name" value="Quinoprotein_ADH-like_sf"/>
</dbReference>
<dbReference type="InterPro" id="IPR013934">
    <property type="entry name" value="Utp13_C"/>
</dbReference>
<dbReference type="InterPro" id="IPR015943">
    <property type="entry name" value="WD40/YVTN_repeat-like_dom_sf"/>
</dbReference>
<dbReference type="InterPro" id="IPR019775">
    <property type="entry name" value="WD40_repeat_CS"/>
</dbReference>
<dbReference type="InterPro" id="IPR036322">
    <property type="entry name" value="WD40_repeat_dom_sf"/>
</dbReference>
<dbReference type="InterPro" id="IPR001680">
    <property type="entry name" value="WD40_rpt"/>
</dbReference>
<dbReference type="PANTHER" id="PTHR19854">
    <property type="entry name" value="TRANSDUCIN BETA-LIKE 3"/>
    <property type="match status" value="1"/>
</dbReference>
<dbReference type="PANTHER" id="PTHR19854:SF15">
    <property type="entry name" value="TRANSDUCIN BETA-LIKE PROTEIN 3"/>
    <property type="match status" value="1"/>
</dbReference>
<dbReference type="Pfam" id="PF08625">
    <property type="entry name" value="Utp13"/>
    <property type="match status" value="1"/>
</dbReference>
<dbReference type="Pfam" id="PF00400">
    <property type="entry name" value="WD40"/>
    <property type="match status" value="9"/>
</dbReference>
<dbReference type="PRINTS" id="PR00320">
    <property type="entry name" value="GPROTEINBRPT"/>
</dbReference>
<dbReference type="SMART" id="SM00320">
    <property type="entry name" value="WD40"/>
    <property type="match status" value="13"/>
</dbReference>
<dbReference type="SUPFAM" id="SSF50998">
    <property type="entry name" value="Quinoprotein alcohol dehydrogenase-like"/>
    <property type="match status" value="1"/>
</dbReference>
<dbReference type="SUPFAM" id="SSF50978">
    <property type="entry name" value="WD40 repeat-like"/>
    <property type="match status" value="1"/>
</dbReference>
<dbReference type="PROSITE" id="PS00678">
    <property type="entry name" value="WD_REPEATS_1"/>
    <property type="match status" value="2"/>
</dbReference>
<dbReference type="PROSITE" id="PS50082">
    <property type="entry name" value="WD_REPEATS_2"/>
    <property type="match status" value="9"/>
</dbReference>
<dbReference type="PROSITE" id="PS50294">
    <property type="entry name" value="WD_REPEATS_REGION"/>
    <property type="match status" value="1"/>
</dbReference>
<sequence length="800" mass="88372">MAETAAGLCRFKANYAVERKIEPFYKGGKAQLDQTGRHLFCVCGTKVNILDVASGDLIRSLEQEDQEDITAFDLSPDDEVLVTASRALLLAQWAWREGTVARLWKAIHTAPVASMAFDATSTLLATGGCDGAVRVWDIVQHYGTHHFRGSPGVVHLVAFHPDPTRLLLFSSAVDTSIRVWSLQDRSCLAVLTAHYSAVTSLSFSEDGHTMLSSGRDKICIVWDLRSYETSRTVPVFESVEASVLLPEEPALALGVKNSGLHFLTAGDQGILRVWEAASGQCVYTQPQMSGLRQELTHCTLARAAGLLLTVTADHNLLLYEARSLQLQKQFAGYSEEVLDVRFLGPNDSHIIVASNSPCLKVFELQTLACQILHGHTDIVLALDVFRKGWLFASCAKDQSIRIWRMNKAGQVACVAQGSGHTHSVGTICCSRLKESFLVTGSQDCTVKLWPLPEALPSKNTASDGDLIPLQAQSTQRCHDKDINSLAVSPNDKLLATGSQDRTAKLWALPQCQLLGVFSGHRRGLWNVQFSPTDQVLATASADGTIKLWALQDFSCLKTFEGHDASVLKVAFVSRGAQLLSSGSDGLLKLWTIKSNECVRTLDAHEDKVWGLHCSRLDDHAITGGSDSRIILWKDVTEAEQAEEQAKREEQVIKQQELDNLLHEKRYLRALGLAISLDRPHTVLTVIQAIRRDPEACEKLEATVLRLRRDQKEALLRFCITWNTNSRHCHEAQAVLGVLLRHEAPEELLAYDGVRGALEALLPYTERHFQRLSRTLQAATFLDFLWHNMKLSPLPAAPPAL</sequence>
<protein>
    <recommendedName>
        <fullName>Transducin beta-like protein 3</fullName>
    </recommendedName>
</protein>
<evidence type="ECO:0000250" key="1">
    <source>
        <dbReference type="UniProtKB" id="Q12788"/>
    </source>
</evidence>
<proteinExistence type="evidence at transcript level"/>
<gene>
    <name type="primary">Tbl3</name>
</gene>
<accession>Q5U2W5</accession>
<keyword id="KW-0007">Acetylation</keyword>
<keyword id="KW-1017">Isopeptide bond</keyword>
<keyword id="KW-0539">Nucleus</keyword>
<keyword id="KW-1185">Reference proteome</keyword>
<keyword id="KW-0677">Repeat</keyword>
<keyword id="KW-0832">Ubl conjugation</keyword>
<keyword id="KW-0853">WD repeat</keyword>
<reference key="1">
    <citation type="journal article" date="2004" name="Genome Res.">
        <title>The status, quality, and expansion of the NIH full-length cDNA project: the Mammalian Gene Collection (MGC).</title>
        <authorList>
            <consortium name="The MGC Project Team"/>
        </authorList>
    </citation>
    <scope>NUCLEOTIDE SEQUENCE [LARGE SCALE MRNA]</scope>
    <source>
        <tissue>Testis</tissue>
    </source>
</reference>
<comment type="function">
    <text evidence="1">Part of the small subunit (SSU) processome, first precursor of the small eukaryotic ribosomal subunit. During the assembly of the SSU processome in the nucleolus, many ribosome biogenesis factors, an RNA chaperone and ribosomal proteins associate with the nascent pre-rRNA and work in concert to generate RNA folding, modifications, rearrangements and cleavage as well as targeted degradation of pre-ribosomal RNA by the RNA exosome.</text>
</comment>
<comment type="subunit">
    <text evidence="1">Part of the small subunit (SSU) processome, composed of more than 70 proteins and the RNA chaperone small nucleolar RNA (snoRNA) U3.</text>
</comment>
<comment type="subcellular location">
    <subcellularLocation>
        <location evidence="1">Nucleus</location>
        <location evidence="1">Nucleolus</location>
    </subcellularLocation>
</comment>
<feature type="initiator methionine" description="Removed" evidence="1">
    <location>
        <position position="1"/>
    </location>
</feature>
<feature type="chain" id="PRO_0000362981" description="Transducin beta-like protein 3">
    <location>
        <begin position="2"/>
        <end position="800"/>
    </location>
</feature>
<feature type="repeat" description="WD 1">
    <location>
        <begin position="64"/>
        <end position="105"/>
    </location>
</feature>
<feature type="repeat" description="WD 2">
    <location>
        <begin position="107"/>
        <end position="146"/>
    </location>
</feature>
<feature type="repeat" description="WD 3">
    <location>
        <begin position="149"/>
        <end position="190"/>
    </location>
</feature>
<feature type="repeat" description="WD 4">
    <location>
        <begin position="193"/>
        <end position="232"/>
    </location>
</feature>
<feature type="repeat" description="WD 5">
    <location>
        <begin position="245"/>
        <end position="284"/>
    </location>
</feature>
<feature type="repeat" description="WD 6">
    <location>
        <begin position="290"/>
        <end position="329"/>
    </location>
</feature>
<feature type="repeat" description="WD 7">
    <location>
        <begin position="332"/>
        <end position="372"/>
    </location>
</feature>
<feature type="repeat" description="WD 8">
    <location>
        <begin position="374"/>
        <end position="413"/>
    </location>
</feature>
<feature type="repeat" description="WD 9">
    <location>
        <begin position="419"/>
        <end position="459"/>
    </location>
</feature>
<feature type="repeat" description="WD 10">
    <location>
        <begin position="477"/>
        <end position="516"/>
    </location>
</feature>
<feature type="repeat" description="WD 11">
    <location>
        <begin position="519"/>
        <end position="560"/>
    </location>
</feature>
<feature type="repeat" description="WD 12">
    <location>
        <begin position="562"/>
        <end position="602"/>
    </location>
</feature>
<feature type="repeat" description="WD 13">
    <location>
        <begin position="604"/>
        <end position="642"/>
    </location>
</feature>
<feature type="modified residue" description="N-acetylalanine" evidence="1">
    <location>
        <position position="2"/>
    </location>
</feature>
<feature type="cross-link" description="Glycyl lysine isopeptide (Lys-Gly) (interchain with G-Cter in SUMO2)" evidence="1">
    <location>
        <position position="407"/>
    </location>
</feature>